<evidence type="ECO:0000255" key="1">
    <source>
        <dbReference type="HAMAP-Rule" id="MF_00083"/>
    </source>
</evidence>
<feature type="chain" id="PRO_0000187724" description="Peptidyl-tRNA hydrolase">
    <location>
        <begin position="1"/>
        <end position="188"/>
    </location>
</feature>
<feature type="active site" description="Proton acceptor" evidence="1">
    <location>
        <position position="19"/>
    </location>
</feature>
<feature type="binding site" evidence="1">
    <location>
        <position position="14"/>
    </location>
    <ligand>
        <name>tRNA</name>
        <dbReference type="ChEBI" id="CHEBI:17843"/>
    </ligand>
</feature>
<feature type="binding site" evidence="1">
    <location>
        <position position="64"/>
    </location>
    <ligand>
        <name>tRNA</name>
        <dbReference type="ChEBI" id="CHEBI:17843"/>
    </ligand>
</feature>
<feature type="binding site" evidence="1">
    <location>
        <position position="66"/>
    </location>
    <ligand>
        <name>tRNA</name>
        <dbReference type="ChEBI" id="CHEBI:17843"/>
    </ligand>
</feature>
<feature type="binding site" evidence="1">
    <location>
        <position position="112"/>
    </location>
    <ligand>
        <name>tRNA</name>
        <dbReference type="ChEBI" id="CHEBI:17843"/>
    </ligand>
</feature>
<feature type="site" description="Discriminates between blocked and unblocked aminoacyl-tRNA" evidence="1">
    <location>
        <position position="9"/>
    </location>
</feature>
<feature type="site" description="Stabilizes the basic form of H active site to accept a proton" evidence="1">
    <location>
        <position position="91"/>
    </location>
</feature>
<keyword id="KW-0963">Cytoplasm</keyword>
<keyword id="KW-0378">Hydrolase</keyword>
<keyword id="KW-1185">Reference proteome</keyword>
<keyword id="KW-0694">RNA-binding</keyword>
<keyword id="KW-0820">tRNA-binding</keyword>
<reference key="1">
    <citation type="journal article" date="2003" name="Proc. Natl. Acad. Sci. U.S.A.">
        <title>The genome sequence of Clostridium tetani, the causative agent of tetanus disease.</title>
        <authorList>
            <person name="Brueggemann H."/>
            <person name="Baeumer S."/>
            <person name="Fricke W.F."/>
            <person name="Wiezer A."/>
            <person name="Liesegang H."/>
            <person name="Decker I."/>
            <person name="Herzberg C."/>
            <person name="Martinez-Arias R."/>
            <person name="Merkl R."/>
            <person name="Henne A."/>
            <person name="Gottschalk G."/>
        </authorList>
    </citation>
    <scope>NUCLEOTIDE SEQUENCE [LARGE SCALE GENOMIC DNA]</scope>
    <source>
        <strain>Massachusetts / E88</strain>
    </source>
</reference>
<sequence>MFLLVGLGNPGKEYEKTRHNIGFEAVDKISYEYNIPIKRERFKGVFGDGRISNEKVILLKPTTYMNLSGESLREIIEYYNIPITNVIVIYDDVDLEVGRLRIRTKGSAGGHNGIKSIIYNLNSEDFIRLRIGVGKPQRDMVSHVLGKFAKEDEKNIEEVLKIIPELAYTIINQGPQEAMNKYNNFRAE</sequence>
<protein>
    <recommendedName>
        <fullName evidence="1">Peptidyl-tRNA hydrolase</fullName>
        <shortName evidence="1">Pth</shortName>
        <ecNumber evidence="1">3.1.1.29</ecNumber>
    </recommendedName>
</protein>
<gene>
    <name evidence="1" type="primary">pth</name>
    <name type="ordered locus">CTC_00193</name>
</gene>
<organism>
    <name type="scientific">Clostridium tetani (strain Massachusetts / E88)</name>
    <dbReference type="NCBI Taxonomy" id="212717"/>
    <lineage>
        <taxon>Bacteria</taxon>
        <taxon>Bacillati</taxon>
        <taxon>Bacillota</taxon>
        <taxon>Clostridia</taxon>
        <taxon>Eubacteriales</taxon>
        <taxon>Clostridiaceae</taxon>
        <taxon>Clostridium</taxon>
    </lineage>
</organism>
<accession>Q899I4</accession>
<dbReference type="EC" id="3.1.1.29" evidence="1"/>
<dbReference type="EMBL" id="AE015927">
    <property type="protein sequence ID" value="AAO34842.1"/>
    <property type="molecule type" value="Genomic_DNA"/>
</dbReference>
<dbReference type="RefSeq" id="WP_011098512.1">
    <property type="nucleotide sequence ID" value="NC_004557.1"/>
</dbReference>
<dbReference type="SMR" id="Q899I4"/>
<dbReference type="STRING" id="212717.CTC_00193"/>
<dbReference type="GeneID" id="24255120"/>
<dbReference type="KEGG" id="ctc:CTC_00193"/>
<dbReference type="HOGENOM" id="CLU_062456_4_1_9"/>
<dbReference type="OrthoDB" id="9800507at2"/>
<dbReference type="Proteomes" id="UP000001412">
    <property type="component" value="Chromosome"/>
</dbReference>
<dbReference type="GO" id="GO:0005737">
    <property type="term" value="C:cytoplasm"/>
    <property type="evidence" value="ECO:0007669"/>
    <property type="project" value="UniProtKB-SubCell"/>
</dbReference>
<dbReference type="GO" id="GO:0004045">
    <property type="term" value="F:peptidyl-tRNA hydrolase activity"/>
    <property type="evidence" value="ECO:0007669"/>
    <property type="project" value="UniProtKB-UniRule"/>
</dbReference>
<dbReference type="GO" id="GO:0000049">
    <property type="term" value="F:tRNA binding"/>
    <property type="evidence" value="ECO:0007669"/>
    <property type="project" value="UniProtKB-UniRule"/>
</dbReference>
<dbReference type="GO" id="GO:0006515">
    <property type="term" value="P:protein quality control for misfolded or incompletely synthesized proteins"/>
    <property type="evidence" value="ECO:0007669"/>
    <property type="project" value="UniProtKB-UniRule"/>
</dbReference>
<dbReference type="GO" id="GO:0072344">
    <property type="term" value="P:rescue of stalled ribosome"/>
    <property type="evidence" value="ECO:0007669"/>
    <property type="project" value="UniProtKB-UniRule"/>
</dbReference>
<dbReference type="CDD" id="cd00462">
    <property type="entry name" value="PTH"/>
    <property type="match status" value="1"/>
</dbReference>
<dbReference type="FunFam" id="3.40.50.1470:FF:000001">
    <property type="entry name" value="Peptidyl-tRNA hydrolase"/>
    <property type="match status" value="1"/>
</dbReference>
<dbReference type="Gene3D" id="3.40.50.1470">
    <property type="entry name" value="Peptidyl-tRNA hydrolase"/>
    <property type="match status" value="1"/>
</dbReference>
<dbReference type="HAMAP" id="MF_00083">
    <property type="entry name" value="Pept_tRNA_hydro_bact"/>
    <property type="match status" value="1"/>
</dbReference>
<dbReference type="InterPro" id="IPR001328">
    <property type="entry name" value="Pept_tRNA_hydro"/>
</dbReference>
<dbReference type="InterPro" id="IPR018171">
    <property type="entry name" value="Pept_tRNA_hydro_CS"/>
</dbReference>
<dbReference type="InterPro" id="IPR036416">
    <property type="entry name" value="Pept_tRNA_hydro_sf"/>
</dbReference>
<dbReference type="NCBIfam" id="TIGR00447">
    <property type="entry name" value="pth"/>
    <property type="match status" value="1"/>
</dbReference>
<dbReference type="PANTHER" id="PTHR17224">
    <property type="entry name" value="PEPTIDYL-TRNA HYDROLASE"/>
    <property type="match status" value="1"/>
</dbReference>
<dbReference type="PANTHER" id="PTHR17224:SF1">
    <property type="entry name" value="PEPTIDYL-TRNA HYDROLASE"/>
    <property type="match status" value="1"/>
</dbReference>
<dbReference type="Pfam" id="PF01195">
    <property type="entry name" value="Pept_tRNA_hydro"/>
    <property type="match status" value="1"/>
</dbReference>
<dbReference type="SUPFAM" id="SSF53178">
    <property type="entry name" value="Peptidyl-tRNA hydrolase-like"/>
    <property type="match status" value="1"/>
</dbReference>
<dbReference type="PROSITE" id="PS01195">
    <property type="entry name" value="PEPT_TRNA_HYDROL_1"/>
    <property type="match status" value="1"/>
</dbReference>
<dbReference type="PROSITE" id="PS01196">
    <property type="entry name" value="PEPT_TRNA_HYDROL_2"/>
    <property type="match status" value="1"/>
</dbReference>
<proteinExistence type="inferred from homology"/>
<name>PTH_CLOTE</name>
<comment type="function">
    <text evidence="1">Hydrolyzes ribosome-free peptidyl-tRNAs (with 1 or more amino acids incorporated), which drop off the ribosome during protein synthesis, or as a result of ribosome stalling.</text>
</comment>
<comment type="function">
    <text evidence="1">Catalyzes the release of premature peptidyl moieties from peptidyl-tRNA molecules trapped in stalled 50S ribosomal subunits, and thus maintains levels of free tRNAs and 50S ribosomes.</text>
</comment>
<comment type="catalytic activity">
    <reaction evidence="1">
        <text>an N-acyl-L-alpha-aminoacyl-tRNA + H2O = an N-acyl-L-amino acid + a tRNA + H(+)</text>
        <dbReference type="Rhea" id="RHEA:54448"/>
        <dbReference type="Rhea" id="RHEA-COMP:10123"/>
        <dbReference type="Rhea" id="RHEA-COMP:13883"/>
        <dbReference type="ChEBI" id="CHEBI:15377"/>
        <dbReference type="ChEBI" id="CHEBI:15378"/>
        <dbReference type="ChEBI" id="CHEBI:59874"/>
        <dbReference type="ChEBI" id="CHEBI:78442"/>
        <dbReference type="ChEBI" id="CHEBI:138191"/>
        <dbReference type="EC" id="3.1.1.29"/>
    </reaction>
</comment>
<comment type="subunit">
    <text evidence="1">Monomer.</text>
</comment>
<comment type="subcellular location">
    <subcellularLocation>
        <location evidence="1">Cytoplasm</location>
    </subcellularLocation>
</comment>
<comment type="similarity">
    <text evidence="1">Belongs to the PTH family.</text>
</comment>